<organism>
    <name type="scientific">Pan troglodytes</name>
    <name type="common">Chimpanzee</name>
    <dbReference type="NCBI Taxonomy" id="9598"/>
    <lineage>
        <taxon>Eukaryota</taxon>
        <taxon>Metazoa</taxon>
        <taxon>Chordata</taxon>
        <taxon>Craniata</taxon>
        <taxon>Vertebrata</taxon>
        <taxon>Euteleostomi</taxon>
        <taxon>Mammalia</taxon>
        <taxon>Eutheria</taxon>
        <taxon>Euarchontoglires</taxon>
        <taxon>Primates</taxon>
        <taxon>Haplorrhini</taxon>
        <taxon>Catarrhini</taxon>
        <taxon>Hominidae</taxon>
        <taxon>Pan</taxon>
    </lineage>
</organism>
<proteinExistence type="inferred from homology"/>
<accession>A2T7F2</accession>
<dbReference type="EMBL" id="DQ977436">
    <property type="protein sequence ID" value="ABM92107.1"/>
    <property type="molecule type" value="Genomic_DNA"/>
</dbReference>
<dbReference type="RefSeq" id="NP_001129091.1">
    <property type="nucleotide sequence ID" value="NM_001135619.1"/>
</dbReference>
<dbReference type="RefSeq" id="XP_009434717.2">
    <property type="nucleotide sequence ID" value="XM_009436442.4"/>
</dbReference>
<dbReference type="RefSeq" id="XP_009434719.2">
    <property type="nucleotide sequence ID" value="XM_009436444.5"/>
</dbReference>
<dbReference type="RefSeq" id="XP_009434720.2">
    <property type="nucleotide sequence ID" value="XM_009436445.4"/>
</dbReference>
<dbReference type="RefSeq" id="XP_009434721.2">
    <property type="nucleotide sequence ID" value="XM_009436446.4"/>
</dbReference>
<dbReference type="FunCoup" id="A2T7F2">
    <property type="interactions" value="270"/>
</dbReference>
<dbReference type="STRING" id="9598.ENSPTRP00000055316"/>
<dbReference type="PaxDb" id="9598-ENSPTRP00000055316"/>
<dbReference type="GeneID" id="469030"/>
<dbReference type="KEGG" id="ptr:469030"/>
<dbReference type="CTD" id="5178"/>
<dbReference type="eggNOG" id="KOG1721">
    <property type="taxonomic scope" value="Eukaryota"/>
</dbReference>
<dbReference type="InParanoid" id="A2T7F2"/>
<dbReference type="OrthoDB" id="11418at9604"/>
<dbReference type="Proteomes" id="UP000002277">
    <property type="component" value="Unplaced"/>
</dbReference>
<dbReference type="GO" id="GO:0005737">
    <property type="term" value="C:cytoplasm"/>
    <property type="evidence" value="ECO:0007669"/>
    <property type="project" value="UniProtKB-SubCell"/>
</dbReference>
<dbReference type="GO" id="GO:0005634">
    <property type="term" value="C:nucleus"/>
    <property type="evidence" value="ECO:0000318"/>
    <property type="project" value="GO_Central"/>
</dbReference>
<dbReference type="GO" id="GO:0000981">
    <property type="term" value="F:DNA-binding transcription factor activity, RNA polymerase II-specific"/>
    <property type="evidence" value="ECO:0000318"/>
    <property type="project" value="GO_Central"/>
</dbReference>
<dbReference type="GO" id="GO:0000978">
    <property type="term" value="F:RNA polymerase II cis-regulatory region sequence-specific DNA binding"/>
    <property type="evidence" value="ECO:0000318"/>
    <property type="project" value="GO_Central"/>
</dbReference>
<dbReference type="GO" id="GO:0008270">
    <property type="term" value="F:zinc ion binding"/>
    <property type="evidence" value="ECO:0007669"/>
    <property type="project" value="UniProtKB-KW"/>
</dbReference>
<dbReference type="GO" id="GO:0006915">
    <property type="term" value="P:apoptotic process"/>
    <property type="evidence" value="ECO:0007669"/>
    <property type="project" value="UniProtKB-KW"/>
</dbReference>
<dbReference type="GO" id="GO:0006357">
    <property type="term" value="P:regulation of transcription by RNA polymerase II"/>
    <property type="evidence" value="ECO:0000318"/>
    <property type="project" value="GO_Central"/>
</dbReference>
<dbReference type="CDD" id="cd07936">
    <property type="entry name" value="SCAN"/>
    <property type="match status" value="1"/>
</dbReference>
<dbReference type="FunFam" id="3.30.160.60:FF:001567">
    <property type="entry name" value="Paternally expressed 3"/>
    <property type="match status" value="1"/>
</dbReference>
<dbReference type="FunFam" id="3.30.160.60:FF:002438">
    <property type="entry name" value="Paternally expressed 3"/>
    <property type="match status" value="1"/>
</dbReference>
<dbReference type="FunFam" id="3.30.160.60:FF:002668">
    <property type="entry name" value="Paternally expressed 3"/>
    <property type="match status" value="1"/>
</dbReference>
<dbReference type="FunFam" id="3.30.160.60:FF:001889">
    <property type="entry name" value="Paternally-expressed gene 3 protein"/>
    <property type="match status" value="1"/>
</dbReference>
<dbReference type="FunFam" id="3.30.160.60:FF:002100">
    <property type="entry name" value="Paternally-expressed gene 3 protein"/>
    <property type="match status" value="1"/>
</dbReference>
<dbReference type="FunFam" id="3.30.160.60:FF:003286">
    <property type="entry name" value="Paternally-expressed gene 3 protein"/>
    <property type="match status" value="1"/>
</dbReference>
<dbReference type="FunFam" id="3.30.160.60:FF:001328">
    <property type="entry name" value="paternally-expressed gene 3 protein"/>
    <property type="match status" value="1"/>
</dbReference>
<dbReference type="FunFam" id="3.30.160.60:FF:001757">
    <property type="entry name" value="paternally-expressed gene 3 protein isoform X1"/>
    <property type="match status" value="1"/>
</dbReference>
<dbReference type="FunFam" id="3.30.160.60:FF:000661">
    <property type="entry name" value="paternally-expressed gene 3 protein-like"/>
    <property type="match status" value="1"/>
</dbReference>
<dbReference type="FunFam" id="1.10.4020.10:FF:000001">
    <property type="entry name" value="zinc finger protein 263 isoform X1"/>
    <property type="match status" value="1"/>
</dbReference>
<dbReference type="Gene3D" id="3.30.160.60">
    <property type="entry name" value="Classic Zinc Finger"/>
    <property type="match status" value="9"/>
</dbReference>
<dbReference type="Gene3D" id="1.10.4020.10">
    <property type="entry name" value="DNA breaking-rejoining enzymes"/>
    <property type="match status" value="1"/>
</dbReference>
<dbReference type="InterPro" id="IPR050826">
    <property type="entry name" value="Krueppel_C2H2_ZnFinger"/>
</dbReference>
<dbReference type="InterPro" id="IPR003309">
    <property type="entry name" value="SCAN_dom"/>
</dbReference>
<dbReference type="InterPro" id="IPR038269">
    <property type="entry name" value="SCAN_sf"/>
</dbReference>
<dbReference type="InterPro" id="IPR036236">
    <property type="entry name" value="Znf_C2H2_sf"/>
</dbReference>
<dbReference type="InterPro" id="IPR013087">
    <property type="entry name" value="Znf_C2H2_type"/>
</dbReference>
<dbReference type="PANTHER" id="PTHR24377">
    <property type="entry name" value="IP01015P-RELATED"/>
    <property type="match status" value="1"/>
</dbReference>
<dbReference type="Pfam" id="PF02023">
    <property type="entry name" value="SCAN"/>
    <property type="match status" value="1"/>
</dbReference>
<dbReference type="Pfam" id="PF00096">
    <property type="entry name" value="zf-C2H2"/>
    <property type="match status" value="10"/>
</dbReference>
<dbReference type="Pfam" id="PF13912">
    <property type="entry name" value="zf-C2H2_6"/>
    <property type="match status" value="1"/>
</dbReference>
<dbReference type="SMART" id="SM00431">
    <property type="entry name" value="SCAN"/>
    <property type="match status" value="1"/>
</dbReference>
<dbReference type="SMART" id="SM00355">
    <property type="entry name" value="ZnF_C2H2"/>
    <property type="match status" value="12"/>
</dbReference>
<dbReference type="SUPFAM" id="SSF57667">
    <property type="entry name" value="beta-beta-alpha zinc fingers"/>
    <property type="match status" value="9"/>
</dbReference>
<dbReference type="SUPFAM" id="SSF47353">
    <property type="entry name" value="Retrovirus capsid dimerization domain-like"/>
    <property type="match status" value="1"/>
</dbReference>
<dbReference type="PROSITE" id="PS50804">
    <property type="entry name" value="SCAN_BOX"/>
    <property type="match status" value="1"/>
</dbReference>
<dbReference type="PROSITE" id="PS00028">
    <property type="entry name" value="ZINC_FINGER_C2H2_1"/>
    <property type="match status" value="12"/>
</dbReference>
<dbReference type="PROSITE" id="PS50157">
    <property type="entry name" value="ZINC_FINGER_C2H2_2"/>
    <property type="match status" value="12"/>
</dbReference>
<reference key="1">
    <citation type="submission" date="2006-08" db="EMBL/GenBank/DDBJ databases">
        <title>Positive selection in transcription factor genes on the human lineage.</title>
        <authorList>
            <person name="Nickel G.C."/>
            <person name="Tefft D.L."/>
            <person name="Trevarthen K."/>
            <person name="Funt J."/>
            <person name="Adams M.D."/>
        </authorList>
    </citation>
    <scope>NUCLEOTIDE SEQUENCE [GENOMIC DNA]</scope>
</reference>
<name>PEG3_PANTR</name>
<feature type="chain" id="PRO_0000285534" description="Paternally-expressed gene 3 protein">
    <location>
        <begin position="1"/>
        <end position="1588"/>
    </location>
</feature>
<feature type="domain" description="SCAN box" evidence="3">
    <location>
        <begin position="46"/>
        <end position="128"/>
    </location>
</feature>
<feature type="repeat" description="2-1">
    <location>
        <begin position="1397"/>
        <end position="1403"/>
    </location>
</feature>
<feature type="repeat" description="2-2">
    <location>
        <begin position="1404"/>
        <end position="1410"/>
    </location>
</feature>
<feature type="repeat" description="2-3">
    <location>
        <begin position="1411"/>
        <end position="1417"/>
    </location>
</feature>
<feature type="repeat" description="1-1">
    <location>
        <begin position="1418"/>
        <end position="1422"/>
    </location>
</feature>
<feature type="repeat" description="1-2">
    <location>
        <begin position="1425"/>
        <end position="1429"/>
    </location>
</feature>
<feature type="repeat" description="1-3">
    <location>
        <begin position="1432"/>
        <end position="1436"/>
    </location>
</feature>
<feature type="repeat" description="1-4">
    <location>
        <begin position="1439"/>
        <end position="1443"/>
    </location>
</feature>
<feature type="zinc finger region" description="C2H2-type 1" evidence="2">
    <location>
        <begin position="454"/>
        <end position="476"/>
    </location>
</feature>
<feature type="zinc finger region" description="C2H2-type 2" evidence="2">
    <location>
        <begin position="507"/>
        <end position="529"/>
    </location>
</feature>
<feature type="zinc finger region" description="C2H2-type 3" evidence="2">
    <location>
        <begin position="565"/>
        <end position="587"/>
    </location>
</feature>
<feature type="zinc finger region" description="C2H2-type 4" evidence="2">
    <location>
        <begin position="627"/>
        <end position="649"/>
    </location>
</feature>
<feature type="zinc finger region" description="C2H2-type 5" evidence="2">
    <location>
        <begin position="969"/>
        <end position="991"/>
    </location>
</feature>
<feature type="zinc finger region" description="C2H2-type 6" evidence="2">
    <location>
        <begin position="1107"/>
        <end position="1129"/>
    </location>
</feature>
<feature type="zinc finger region" description="C2H2-type 7" evidence="2">
    <location>
        <begin position="1163"/>
        <end position="1185"/>
    </location>
</feature>
<feature type="zinc finger region" description="C2H2-type 8" evidence="2">
    <location>
        <begin position="1225"/>
        <end position="1247"/>
    </location>
</feature>
<feature type="zinc finger region" description="C2H2-type 9" evidence="2">
    <location>
        <begin position="1282"/>
        <end position="1304"/>
    </location>
</feature>
<feature type="zinc finger region" description="C2H2-type 10" evidence="2">
    <location>
        <begin position="1332"/>
        <end position="1354"/>
    </location>
</feature>
<feature type="zinc finger region" description="C2H2-type 11" evidence="2">
    <location>
        <begin position="1505"/>
        <end position="1527"/>
    </location>
</feature>
<feature type="zinc finger region" description="C2H2-type 12" evidence="2">
    <location>
        <begin position="1564"/>
        <end position="1586"/>
    </location>
</feature>
<feature type="region of interest" description="Disordered" evidence="4">
    <location>
        <begin position="128"/>
        <end position="230"/>
    </location>
</feature>
<feature type="region of interest" description="Disordered" evidence="4">
    <location>
        <begin position="266"/>
        <end position="306"/>
    </location>
</feature>
<feature type="region of interest" description="Disordered" evidence="4">
    <location>
        <begin position="319"/>
        <end position="349"/>
    </location>
</feature>
<feature type="region of interest" description="Disordered" evidence="4">
    <location>
        <begin position="588"/>
        <end position="610"/>
    </location>
</feature>
<feature type="region of interest" description="Disordered" evidence="4">
    <location>
        <begin position="838"/>
        <end position="930"/>
    </location>
</feature>
<feature type="region of interest" description="Disordered" evidence="4">
    <location>
        <begin position="1056"/>
        <end position="1104"/>
    </location>
</feature>
<feature type="region of interest" description="Disordered" evidence="4">
    <location>
        <begin position="1395"/>
        <end position="1495"/>
    </location>
</feature>
<feature type="region of interest" description="3 X 7 AA repeat of P-E-V-E-A-A-E">
    <location>
        <begin position="1397"/>
        <end position="1417"/>
    </location>
</feature>
<feature type="region of interest" description="4 X 5 AA repeat of P-X-G-E-A">
    <location>
        <begin position="1418"/>
        <end position="1443"/>
    </location>
</feature>
<feature type="compositionally biased region" description="Acidic residues" evidence="4">
    <location>
        <begin position="129"/>
        <end position="142"/>
    </location>
</feature>
<feature type="compositionally biased region" description="Basic and acidic residues" evidence="4">
    <location>
        <begin position="143"/>
        <end position="152"/>
    </location>
</feature>
<feature type="compositionally biased region" description="Basic and acidic residues" evidence="4">
    <location>
        <begin position="161"/>
        <end position="182"/>
    </location>
</feature>
<feature type="compositionally biased region" description="Basic and acidic residues" evidence="4">
    <location>
        <begin position="206"/>
        <end position="225"/>
    </location>
</feature>
<feature type="compositionally biased region" description="Basic and acidic residues" evidence="4">
    <location>
        <begin position="295"/>
        <end position="306"/>
    </location>
</feature>
<feature type="compositionally biased region" description="Basic and acidic residues" evidence="4">
    <location>
        <begin position="588"/>
        <end position="607"/>
    </location>
</feature>
<feature type="compositionally biased region" description="Basic and acidic residues" evidence="4">
    <location>
        <begin position="868"/>
        <end position="881"/>
    </location>
</feature>
<feature type="compositionally biased region" description="Basic and acidic residues" evidence="4">
    <location>
        <begin position="1071"/>
        <end position="1082"/>
    </location>
</feature>
<feature type="compositionally biased region" description="Acidic residues" evidence="4">
    <location>
        <begin position="1395"/>
        <end position="1415"/>
    </location>
</feature>
<feature type="compositionally biased region" description="Acidic residues" evidence="4">
    <location>
        <begin position="1449"/>
        <end position="1466"/>
    </location>
</feature>
<feature type="compositionally biased region" description="Acidic residues" evidence="4">
    <location>
        <begin position="1475"/>
        <end position="1495"/>
    </location>
</feature>
<gene>
    <name type="primary">PEG3</name>
</gene>
<sequence length="1588" mass="180688">MLPPKHLSATKPKKSWAPNLYELDSDLTKEPDVIIGEGPTDSEFFHQRFRNLIYVEFVGPRKTLIKLRNLCLDWLQPETHTKEEIIELLVLEQYLTIIPEKLKPWVRAKKPENCEKLVTLLENYKEMYQPEDDNNSDVTSDDDMTRNRRESSPPHSVHSFSGDRDWDRRGRSRDMEPRDRWSHTRNPRSRMPQRDLSLPVVAKTSFEMDRDDDRDSRAYESRSQDAESYQNVVDLAEDRKPHNTIQDNMENYRKLLSLGVQLAEDDGHSHMTQGHSSRSKRSAYPSTSRGLKTMPEAKKSTHRRGICEDESSHGVIMEKFIKDVSRSSKSGRARESSDRSQRFPRMSDDNWKDISLNKRESVIQQRVYEGNAFRGGFRFNSTLVSRKRVLERKRRYHFDTDGKGSIHDQKACPRKKPFECGSEMRKAMSMSSLSSLSSPSFTESQPIDFGAMPYVCDECGRSFSVISEFVEHQIMHTRENLYEYGESFIHSVAVSEVQKSQVGGKRFECKDCGETFNKSAALAEHRKIHARGYLVECKNQECEEAFMPSPTFSELQKIYGKDKFYECRVCKETFLHSSALIEHQKIHFGDDKDNEREHERERERGETFRPSPALNEFQKMYGKEKMYECKVCGETFLHSSSLKEHQKIHTRGNPFENKGKVCEETFIPGQSLKKRQKTYNKEKLYDFTDGRDAFMQSSELSEHQKIHSRKNLFEGRGYEKSVIHSGPFTESQKSHTITRPLESDEDEKAFTISSNPYENQKIPTKENVYEAKSYERSVIHSLASVEAQKSHSVAGPSKPKVMAESTIQSFDAINHQRVRAGGNTSEGREYSRSVIHSLVASKPPRSHNGNELVESNEKGESSIYISDLNDKRQKIPARENPCEGGSKNRNYEDSVIQSVSRAKPQKSVPGEGSGEFKKDGEFSVPSSNVREYQKARAKKKYIEHRSNETSVIHSLPFGEQTFRPRGMLYECQECGECFAHSSDLTEHQKIHEREKPSGSRNYEWSVIRSLAPTDPQTSYAQEQYAKEQAWNKCKEFRQFFATSEDLNTNQKIYDQEKSHGEESQGENTDGEETHSEETHGQETIEDPVIQGSDMEDPQKDDPDDKIYECEDCGLGFVDLTDLTDHQKVHSRKCLVDSREYTHSVIHTHSISEYQRDYTGEQLYECPKCGESFIHSSFLFEHQRIHEQDQLYSMKGCDDGFIALLPMKPRRNRAAERNPALAGSAIRCLLCGQGFIHSSALNEHMRLHREDDLLEQSQMAEEAIIPGLALTEFQRSQTEERLFECAVCGESFINPAELADHVTVHKNEPYEYGSSYTHTSFLTEPLKGAIPFYECKDCGKSFIHSTVLTKHKELHLEEEEEDEAAAAAAAAAQEVEANVHVPQVVLRIQGSNVEAAEPEVEAAEPEVEAAEPEVEAAEPNGEAEGPDGEAAEPIGEAGQPNGEAEQPNGDADEPDGAGIEDPEERAEEPEGKAEEPEGDADEPDGVGIEDPEEGEDQEIQVEEPYYDCHECTETFTSSTAFGEHLKTHASMIIFEPANAFGECSGYIERASTSTGGANQADEKYFKCDVCGQLFNDRLSLARHQNTHTG</sequence>
<protein>
    <recommendedName>
        <fullName>Paternally-expressed gene 3 protein</fullName>
    </recommendedName>
</protein>
<keyword id="KW-0053">Apoptosis</keyword>
<keyword id="KW-0963">Cytoplasm</keyword>
<keyword id="KW-0479">Metal-binding</keyword>
<keyword id="KW-0539">Nucleus</keyword>
<keyword id="KW-1185">Reference proteome</keyword>
<keyword id="KW-0677">Repeat</keyword>
<keyword id="KW-0862">Zinc</keyword>
<keyword id="KW-0863">Zinc-finger</keyword>
<comment type="function">
    <text evidence="1">Induces apoptosis in cooperation with SIAH1A. Acts as a mediator between p53/TP53 and BAX in a neuronal death pathway that is activated by DNA damage. Acts synergistically with TRAF2 and inhibits TNF induced apoptosis through activation of NF-kappa-B (By similarity).</text>
</comment>
<comment type="subunit">
    <text evidence="1">Homodimer. Interacts with SIAH1A and SIAH2. Interacts with TRAF2 (By similarity).</text>
</comment>
<comment type="subcellular location">
    <subcellularLocation>
        <location evidence="3">Nucleus</location>
    </subcellularLocation>
    <subcellularLocation>
        <location evidence="1">Cytoplasm</location>
    </subcellularLocation>
</comment>
<comment type="domain">
    <text evidence="1">The SCAN domain enables PEG3 homo- or heterodimerization to control gene expression in a combinatorial fashion.</text>
</comment>
<comment type="similarity">
    <text evidence="5">Belongs to the krueppel C2H2-type zinc-finger protein family.</text>
</comment>
<evidence type="ECO:0000250" key="1"/>
<evidence type="ECO:0000255" key="2">
    <source>
        <dbReference type="PROSITE-ProRule" id="PRU00042"/>
    </source>
</evidence>
<evidence type="ECO:0000255" key="3">
    <source>
        <dbReference type="PROSITE-ProRule" id="PRU00187"/>
    </source>
</evidence>
<evidence type="ECO:0000256" key="4">
    <source>
        <dbReference type="SAM" id="MobiDB-lite"/>
    </source>
</evidence>
<evidence type="ECO:0000305" key="5"/>